<comment type="function">
    <text evidence="1">Catalyzes the ATP-dependent conversion of 7-carboxy-7-deazaguanine (CDG) to 7-cyano-7-deazaguanine (preQ(0)).</text>
</comment>
<comment type="catalytic activity">
    <reaction evidence="1">
        <text>7-carboxy-7-deazaguanine + NH4(+) + ATP = 7-cyano-7-deazaguanine + ADP + phosphate + H2O + H(+)</text>
        <dbReference type="Rhea" id="RHEA:27982"/>
        <dbReference type="ChEBI" id="CHEBI:15377"/>
        <dbReference type="ChEBI" id="CHEBI:15378"/>
        <dbReference type="ChEBI" id="CHEBI:28938"/>
        <dbReference type="ChEBI" id="CHEBI:30616"/>
        <dbReference type="ChEBI" id="CHEBI:43474"/>
        <dbReference type="ChEBI" id="CHEBI:45075"/>
        <dbReference type="ChEBI" id="CHEBI:61036"/>
        <dbReference type="ChEBI" id="CHEBI:456216"/>
        <dbReference type="EC" id="6.3.4.20"/>
    </reaction>
</comment>
<comment type="cofactor">
    <cofactor evidence="1">
        <name>Zn(2+)</name>
        <dbReference type="ChEBI" id="CHEBI:29105"/>
    </cofactor>
    <text evidence="1">Binds 1 zinc ion per subunit.</text>
</comment>
<comment type="pathway">
    <text evidence="1">Purine metabolism; 7-cyano-7-deazaguanine biosynthesis.</text>
</comment>
<comment type="similarity">
    <text evidence="1">Belongs to the QueC family.</text>
</comment>
<dbReference type="EC" id="6.3.4.20" evidence="1"/>
<dbReference type="EMBL" id="CU928163">
    <property type="protein sequence ID" value="CAR11699.1"/>
    <property type="molecule type" value="Genomic_DNA"/>
</dbReference>
<dbReference type="RefSeq" id="WP_000817227.1">
    <property type="nucleotide sequence ID" value="NC_011751.1"/>
</dbReference>
<dbReference type="RefSeq" id="YP_002411247.1">
    <property type="nucleotide sequence ID" value="NC_011751.1"/>
</dbReference>
<dbReference type="SMR" id="B7N8Z8"/>
<dbReference type="STRING" id="585056.ECUMN_0484"/>
<dbReference type="GeneID" id="86862989"/>
<dbReference type="KEGG" id="eum:ECUMN_0484"/>
<dbReference type="PATRIC" id="fig|585056.7.peg.689"/>
<dbReference type="HOGENOM" id="CLU_081854_0_0_6"/>
<dbReference type="UniPathway" id="UPA00391"/>
<dbReference type="Proteomes" id="UP000007097">
    <property type="component" value="Chromosome"/>
</dbReference>
<dbReference type="GO" id="GO:0005524">
    <property type="term" value="F:ATP binding"/>
    <property type="evidence" value="ECO:0007669"/>
    <property type="project" value="UniProtKB-UniRule"/>
</dbReference>
<dbReference type="GO" id="GO:0016879">
    <property type="term" value="F:ligase activity, forming carbon-nitrogen bonds"/>
    <property type="evidence" value="ECO:0007669"/>
    <property type="project" value="UniProtKB-UniRule"/>
</dbReference>
<dbReference type="GO" id="GO:0008270">
    <property type="term" value="F:zinc ion binding"/>
    <property type="evidence" value="ECO:0007669"/>
    <property type="project" value="UniProtKB-UniRule"/>
</dbReference>
<dbReference type="GO" id="GO:0008616">
    <property type="term" value="P:queuosine biosynthetic process"/>
    <property type="evidence" value="ECO:0007669"/>
    <property type="project" value="UniProtKB-UniRule"/>
</dbReference>
<dbReference type="CDD" id="cd01995">
    <property type="entry name" value="QueC-like"/>
    <property type="match status" value="1"/>
</dbReference>
<dbReference type="FunFam" id="3.40.50.620:FF:000017">
    <property type="entry name" value="7-cyano-7-deazaguanine synthase"/>
    <property type="match status" value="1"/>
</dbReference>
<dbReference type="Gene3D" id="3.40.50.620">
    <property type="entry name" value="HUPs"/>
    <property type="match status" value="1"/>
</dbReference>
<dbReference type="HAMAP" id="MF_01633">
    <property type="entry name" value="QueC"/>
    <property type="match status" value="1"/>
</dbReference>
<dbReference type="InterPro" id="IPR018317">
    <property type="entry name" value="QueC"/>
</dbReference>
<dbReference type="InterPro" id="IPR014729">
    <property type="entry name" value="Rossmann-like_a/b/a_fold"/>
</dbReference>
<dbReference type="NCBIfam" id="TIGR00364">
    <property type="entry name" value="7-cyano-7-deazaguanine synthase QueC"/>
    <property type="match status" value="1"/>
</dbReference>
<dbReference type="NCBIfam" id="NF008317">
    <property type="entry name" value="PRK11106.1"/>
    <property type="match status" value="1"/>
</dbReference>
<dbReference type="PANTHER" id="PTHR42914">
    <property type="entry name" value="7-CYANO-7-DEAZAGUANINE SYNTHASE"/>
    <property type="match status" value="1"/>
</dbReference>
<dbReference type="PANTHER" id="PTHR42914:SF1">
    <property type="entry name" value="7-CYANO-7-DEAZAGUANINE SYNTHASE"/>
    <property type="match status" value="1"/>
</dbReference>
<dbReference type="Pfam" id="PF06508">
    <property type="entry name" value="QueC"/>
    <property type="match status" value="1"/>
</dbReference>
<dbReference type="PIRSF" id="PIRSF006293">
    <property type="entry name" value="ExsB"/>
    <property type="match status" value="1"/>
</dbReference>
<dbReference type="SUPFAM" id="SSF52402">
    <property type="entry name" value="Adenine nucleotide alpha hydrolases-like"/>
    <property type="match status" value="1"/>
</dbReference>
<keyword id="KW-0067">ATP-binding</keyword>
<keyword id="KW-0436">Ligase</keyword>
<keyword id="KW-0479">Metal-binding</keyword>
<keyword id="KW-0547">Nucleotide-binding</keyword>
<keyword id="KW-0671">Queuosine biosynthesis</keyword>
<keyword id="KW-0862">Zinc</keyword>
<organism>
    <name type="scientific">Escherichia coli O17:K52:H18 (strain UMN026 / ExPEC)</name>
    <dbReference type="NCBI Taxonomy" id="585056"/>
    <lineage>
        <taxon>Bacteria</taxon>
        <taxon>Pseudomonadati</taxon>
        <taxon>Pseudomonadota</taxon>
        <taxon>Gammaproteobacteria</taxon>
        <taxon>Enterobacterales</taxon>
        <taxon>Enterobacteriaceae</taxon>
        <taxon>Escherichia</taxon>
    </lineage>
</organism>
<evidence type="ECO:0000255" key="1">
    <source>
        <dbReference type="HAMAP-Rule" id="MF_01633"/>
    </source>
</evidence>
<accession>B7N8Z8</accession>
<proteinExistence type="inferred from homology"/>
<gene>
    <name evidence="1" type="primary">queC</name>
    <name type="ordered locus">ECUMN_0484</name>
</gene>
<sequence>MKRAVVVFSGGQDSTTCLVQALQQYDEVHCVTFDYGQRHRAEIDVARELALKLGARAHKVLDVTLLNELAVSSLTRDSIPVPDYEPEADGIPNTFVPGRNILFLTLAAIYAYQVKAEAVITGVCETDFSGYPDCRDEFVKALNHAVSLGMAKDIRFETPLMWIDKAETWALADYYGKLDLVRNETLTCYNGIKGDGCGHCAACNLRANGLNHYLADKPTVMAAMKQKTGLK</sequence>
<protein>
    <recommendedName>
        <fullName evidence="1">7-cyano-7-deazaguanine synthase</fullName>
        <ecNumber evidence="1">6.3.4.20</ecNumber>
    </recommendedName>
    <alternativeName>
        <fullName evidence="1">7-cyano-7-carbaguanine synthase</fullName>
    </alternativeName>
    <alternativeName>
        <fullName evidence="1">PreQ(0) synthase</fullName>
    </alternativeName>
    <alternativeName>
        <fullName evidence="1">Queuosine biosynthesis protein QueC</fullName>
    </alternativeName>
</protein>
<reference key="1">
    <citation type="journal article" date="2009" name="PLoS Genet.">
        <title>Organised genome dynamics in the Escherichia coli species results in highly diverse adaptive paths.</title>
        <authorList>
            <person name="Touchon M."/>
            <person name="Hoede C."/>
            <person name="Tenaillon O."/>
            <person name="Barbe V."/>
            <person name="Baeriswyl S."/>
            <person name="Bidet P."/>
            <person name="Bingen E."/>
            <person name="Bonacorsi S."/>
            <person name="Bouchier C."/>
            <person name="Bouvet O."/>
            <person name="Calteau A."/>
            <person name="Chiapello H."/>
            <person name="Clermont O."/>
            <person name="Cruveiller S."/>
            <person name="Danchin A."/>
            <person name="Diard M."/>
            <person name="Dossat C."/>
            <person name="Karoui M.E."/>
            <person name="Frapy E."/>
            <person name="Garry L."/>
            <person name="Ghigo J.M."/>
            <person name="Gilles A.M."/>
            <person name="Johnson J."/>
            <person name="Le Bouguenec C."/>
            <person name="Lescat M."/>
            <person name="Mangenot S."/>
            <person name="Martinez-Jehanne V."/>
            <person name="Matic I."/>
            <person name="Nassif X."/>
            <person name="Oztas S."/>
            <person name="Petit M.A."/>
            <person name="Pichon C."/>
            <person name="Rouy Z."/>
            <person name="Ruf C.S."/>
            <person name="Schneider D."/>
            <person name="Tourret J."/>
            <person name="Vacherie B."/>
            <person name="Vallenet D."/>
            <person name="Medigue C."/>
            <person name="Rocha E.P.C."/>
            <person name="Denamur E."/>
        </authorList>
    </citation>
    <scope>NUCLEOTIDE SEQUENCE [LARGE SCALE GENOMIC DNA]</scope>
    <source>
        <strain>UMN026 / ExPEC</strain>
    </source>
</reference>
<feature type="chain" id="PRO_1000186595" description="7-cyano-7-deazaguanine synthase">
    <location>
        <begin position="1"/>
        <end position="231"/>
    </location>
</feature>
<feature type="binding site" evidence="1">
    <location>
        <begin position="8"/>
        <end position="18"/>
    </location>
    <ligand>
        <name>ATP</name>
        <dbReference type="ChEBI" id="CHEBI:30616"/>
    </ligand>
</feature>
<feature type="binding site" evidence="1">
    <location>
        <position position="188"/>
    </location>
    <ligand>
        <name>Zn(2+)</name>
        <dbReference type="ChEBI" id="CHEBI:29105"/>
    </ligand>
</feature>
<feature type="binding site" evidence="1">
    <location>
        <position position="197"/>
    </location>
    <ligand>
        <name>Zn(2+)</name>
        <dbReference type="ChEBI" id="CHEBI:29105"/>
    </ligand>
</feature>
<feature type="binding site" evidence="1">
    <location>
        <position position="200"/>
    </location>
    <ligand>
        <name>Zn(2+)</name>
        <dbReference type="ChEBI" id="CHEBI:29105"/>
    </ligand>
</feature>
<feature type="binding site" evidence="1">
    <location>
        <position position="203"/>
    </location>
    <ligand>
        <name>Zn(2+)</name>
        <dbReference type="ChEBI" id="CHEBI:29105"/>
    </ligand>
</feature>
<name>QUEC_ECOLU</name>